<comment type="function">
    <text evidence="1">DNA-dependent RNA polymerase catalyzes the transcription of DNA into RNA using the four ribonucleoside triphosphates as substrates.</text>
</comment>
<comment type="catalytic activity">
    <reaction evidence="1">
        <text>RNA(n) + a ribonucleoside 5'-triphosphate = RNA(n+1) + diphosphate</text>
        <dbReference type="Rhea" id="RHEA:21248"/>
        <dbReference type="Rhea" id="RHEA-COMP:14527"/>
        <dbReference type="Rhea" id="RHEA-COMP:17342"/>
        <dbReference type="ChEBI" id="CHEBI:33019"/>
        <dbReference type="ChEBI" id="CHEBI:61557"/>
        <dbReference type="ChEBI" id="CHEBI:140395"/>
        <dbReference type="EC" id="2.7.7.6"/>
    </reaction>
</comment>
<comment type="subunit">
    <text evidence="1">The RNAP catalytic core consists of 2 alpha, 1 beta, 1 beta' and 1 omega subunit. When a sigma factor is associated with the core the holoenzyme is formed, which can initiate transcription.</text>
</comment>
<comment type="similarity">
    <text evidence="1">Belongs to the RNA polymerase beta chain family.</text>
</comment>
<reference key="1">
    <citation type="journal article" date="2008" name="J. Bacteriol.">
        <title>The pangenome structure of Escherichia coli: comparative genomic analysis of E. coli commensal and pathogenic isolates.</title>
        <authorList>
            <person name="Rasko D.A."/>
            <person name="Rosovitz M.J."/>
            <person name="Myers G.S.A."/>
            <person name="Mongodin E.F."/>
            <person name="Fricke W.F."/>
            <person name="Gajer P."/>
            <person name="Crabtree J."/>
            <person name="Sebaihia M."/>
            <person name="Thomson N.R."/>
            <person name="Chaudhuri R."/>
            <person name="Henderson I.R."/>
            <person name="Sperandio V."/>
            <person name="Ravel J."/>
        </authorList>
    </citation>
    <scope>NUCLEOTIDE SEQUENCE [LARGE SCALE GENOMIC DNA]</scope>
    <source>
        <strain>HS</strain>
    </source>
</reference>
<dbReference type="EC" id="2.7.7.6" evidence="1"/>
<dbReference type="EMBL" id="CP000802">
    <property type="protein sequence ID" value="ABV08390.1"/>
    <property type="molecule type" value="Genomic_DNA"/>
</dbReference>
<dbReference type="RefSeq" id="WP_000263098.1">
    <property type="nucleotide sequence ID" value="NC_009800.1"/>
</dbReference>
<dbReference type="SMR" id="A8A786"/>
<dbReference type="GeneID" id="93777907"/>
<dbReference type="KEGG" id="ecx:EcHS_A4220"/>
<dbReference type="HOGENOM" id="CLU_000524_4_3_6"/>
<dbReference type="GO" id="GO:0000428">
    <property type="term" value="C:DNA-directed RNA polymerase complex"/>
    <property type="evidence" value="ECO:0007669"/>
    <property type="project" value="UniProtKB-KW"/>
</dbReference>
<dbReference type="GO" id="GO:0003677">
    <property type="term" value="F:DNA binding"/>
    <property type="evidence" value="ECO:0007669"/>
    <property type="project" value="UniProtKB-UniRule"/>
</dbReference>
<dbReference type="GO" id="GO:0003899">
    <property type="term" value="F:DNA-directed RNA polymerase activity"/>
    <property type="evidence" value="ECO:0007669"/>
    <property type="project" value="UniProtKB-UniRule"/>
</dbReference>
<dbReference type="GO" id="GO:0032549">
    <property type="term" value="F:ribonucleoside binding"/>
    <property type="evidence" value="ECO:0007669"/>
    <property type="project" value="InterPro"/>
</dbReference>
<dbReference type="GO" id="GO:0006351">
    <property type="term" value="P:DNA-templated transcription"/>
    <property type="evidence" value="ECO:0007669"/>
    <property type="project" value="UniProtKB-UniRule"/>
</dbReference>
<dbReference type="CDD" id="cd00653">
    <property type="entry name" value="RNA_pol_B_RPB2"/>
    <property type="match status" value="1"/>
</dbReference>
<dbReference type="FunFam" id="2.30.150.10:FF:000001">
    <property type="entry name" value="DNA-directed RNA polymerase subunit beta"/>
    <property type="match status" value="1"/>
</dbReference>
<dbReference type="FunFam" id="2.40.270.10:FF:000003">
    <property type="entry name" value="DNA-directed RNA polymerase subunit beta"/>
    <property type="match status" value="1"/>
</dbReference>
<dbReference type="FunFam" id="2.40.270.10:FF:000004">
    <property type="entry name" value="DNA-directed RNA polymerase subunit beta"/>
    <property type="match status" value="1"/>
</dbReference>
<dbReference type="FunFam" id="2.40.50.100:FF:000006">
    <property type="entry name" value="DNA-directed RNA polymerase subunit beta"/>
    <property type="match status" value="1"/>
</dbReference>
<dbReference type="FunFam" id="2.40.50.150:FF:000001">
    <property type="entry name" value="DNA-directed RNA polymerase subunit beta"/>
    <property type="match status" value="1"/>
</dbReference>
<dbReference type="FunFam" id="3.90.1100.10:FF:000002">
    <property type="entry name" value="DNA-directed RNA polymerase subunit beta"/>
    <property type="match status" value="1"/>
</dbReference>
<dbReference type="FunFam" id="3.90.1110.10:FF:000001">
    <property type="entry name" value="DNA-directed RNA polymerase subunit beta"/>
    <property type="match status" value="1"/>
</dbReference>
<dbReference type="FunFam" id="3.90.1110.10:FF:000004">
    <property type="entry name" value="DNA-directed RNA polymerase subunit beta"/>
    <property type="match status" value="1"/>
</dbReference>
<dbReference type="FunFam" id="3.90.1800.10:FF:000001">
    <property type="entry name" value="DNA-directed RNA polymerase subunit beta"/>
    <property type="match status" value="1"/>
</dbReference>
<dbReference type="Gene3D" id="2.40.50.100">
    <property type="match status" value="1"/>
</dbReference>
<dbReference type="Gene3D" id="2.40.50.150">
    <property type="match status" value="1"/>
</dbReference>
<dbReference type="Gene3D" id="3.90.1100.10">
    <property type="match status" value="2"/>
</dbReference>
<dbReference type="Gene3D" id="6.10.140.1670">
    <property type="match status" value="1"/>
</dbReference>
<dbReference type="Gene3D" id="2.30.150.10">
    <property type="entry name" value="DNA-directed RNA polymerase, beta subunit, external 1 domain"/>
    <property type="match status" value="1"/>
</dbReference>
<dbReference type="Gene3D" id="2.40.270.10">
    <property type="entry name" value="DNA-directed RNA polymerase, subunit 2, domain 6"/>
    <property type="match status" value="1"/>
</dbReference>
<dbReference type="Gene3D" id="3.90.1800.10">
    <property type="entry name" value="RNA polymerase alpha subunit dimerisation domain"/>
    <property type="match status" value="1"/>
</dbReference>
<dbReference type="Gene3D" id="3.90.1110.10">
    <property type="entry name" value="RNA polymerase Rpb2, domain 2"/>
    <property type="match status" value="1"/>
</dbReference>
<dbReference type="HAMAP" id="MF_01321">
    <property type="entry name" value="RNApol_bact_RpoB"/>
    <property type="match status" value="1"/>
</dbReference>
<dbReference type="InterPro" id="IPR042107">
    <property type="entry name" value="DNA-dir_RNA_pol_bsu_ext_1_sf"/>
</dbReference>
<dbReference type="InterPro" id="IPR019462">
    <property type="entry name" value="DNA-dir_RNA_pol_bsu_external_1"/>
</dbReference>
<dbReference type="InterPro" id="IPR015712">
    <property type="entry name" value="DNA-dir_RNA_pol_su2"/>
</dbReference>
<dbReference type="InterPro" id="IPR007120">
    <property type="entry name" value="DNA-dir_RNAP_su2_dom"/>
</dbReference>
<dbReference type="InterPro" id="IPR037033">
    <property type="entry name" value="DNA-dir_RNAP_su2_hyb_sf"/>
</dbReference>
<dbReference type="InterPro" id="IPR010243">
    <property type="entry name" value="RNA_pol_bsu_bac"/>
</dbReference>
<dbReference type="InterPro" id="IPR007121">
    <property type="entry name" value="RNA_pol_bsu_CS"/>
</dbReference>
<dbReference type="InterPro" id="IPR007644">
    <property type="entry name" value="RNA_pol_bsu_protrusion"/>
</dbReference>
<dbReference type="InterPro" id="IPR007642">
    <property type="entry name" value="RNA_pol_Rpb2_2"/>
</dbReference>
<dbReference type="InterPro" id="IPR037034">
    <property type="entry name" value="RNA_pol_Rpb2_2_sf"/>
</dbReference>
<dbReference type="InterPro" id="IPR007645">
    <property type="entry name" value="RNA_pol_Rpb2_3"/>
</dbReference>
<dbReference type="InterPro" id="IPR007641">
    <property type="entry name" value="RNA_pol_Rpb2_7"/>
</dbReference>
<dbReference type="InterPro" id="IPR014724">
    <property type="entry name" value="RNA_pol_RPB2_OB-fold"/>
</dbReference>
<dbReference type="NCBIfam" id="NF001616">
    <property type="entry name" value="PRK00405.1"/>
    <property type="match status" value="1"/>
</dbReference>
<dbReference type="NCBIfam" id="TIGR02013">
    <property type="entry name" value="rpoB"/>
    <property type="match status" value="1"/>
</dbReference>
<dbReference type="PANTHER" id="PTHR20856">
    <property type="entry name" value="DNA-DIRECTED RNA POLYMERASE I SUBUNIT 2"/>
    <property type="match status" value="1"/>
</dbReference>
<dbReference type="Pfam" id="PF04563">
    <property type="entry name" value="RNA_pol_Rpb2_1"/>
    <property type="match status" value="1"/>
</dbReference>
<dbReference type="Pfam" id="PF04561">
    <property type="entry name" value="RNA_pol_Rpb2_2"/>
    <property type="match status" value="2"/>
</dbReference>
<dbReference type="Pfam" id="PF04565">
    <property type="entry name" value="RNA_pol_Rpb2_3"/>
    <property type="match status" value="1"/>
</dbReference>
<dbReference type="Pfam" id="PF10385">
    <property type="entry name" value="RNA_pol_Rpb2_45"/>
    <property type="match status" value="1"/>
</dbReference>
<dbReference type="Pfam" id="PF00562">
    <property type="entry name" value="RNA_pol_Rpb2_6"/>
    <property type="match status" value="1"/>
</dbReference>
<dbReference type="Pfam" id="PF04560">
    <property type="entry name" value="RNA_pol_Rpb2_7"/>
    <property type="match status" value="1"/>
</dbReference>
<dbReference type="SUPFAM" id="SSF64484">
    <property type="entry name" value="beta and beta-prime subunits of DNA dependent RNA-polymerase"/>
    <property type="match status" value="1"/>
</dbReference>
<dbReference type="PROSITE" id="PS01166">
    <property type="entry name" value="RNA_POL_BETA"/>
    <property type="match status" value="1"/>
</dbReference>
<name>RPOB_ECOHS</name>
<proteinExistence type="inferred from homology"/>
<organism>
    <name type="scientific">Escherichia coli O9:H4 (strain HS)</name>
    <dbReference type="NCBI Taxonomy" id="331112"/>
    <lineage>
        <taxon>Bacteria</taxon>
        <taxon>Pseudomonadati</taxon>
        <taxon>Pseudomonadota</taxon>
        <taxon>Gammaproteobacteria</taxon>
        <taxon>Enterobacterales</taxon>
        <taxon>Enterobacteriaceae</taxon>
        <taxon>Escherichia</taxon>
    </lineage>
</organism>
<protein>
    <recommendedName>
        <fullName evidence="1">DNA-directed RNA polymerase subunit beta</fullName>
        <shortName evidence="1">RNAP subunit beta</shortName>
        <ecNumber evidence="1">2.7.7.6</ecNumber>
    </recommendedName>
    <alternativeName>
        <fullName evidence="1">RNA polymerase subunit beta</fullName>
    </alternativeName>
    <alternativeName>
        <fullName evidence="1">Transcriptase subunit beta</fullName>
    </alternativeName>
</protein>
<accession>A8A786</accession>
<gene>
    <name evidence="1" type="primary">rpoB</name>
    <name type="ordered locus">EcHS_A4220</name>
</gene>
<evidence type="ECO:0000255" key="1">
    <source>
        <dbReference type="HAMAP-Rule" id="MF_01321"/>
    </source>
</evidence>
<sequence length="1342" mass="150632">MVYSYTEKKRIRKDFGKRPQVLDVPYLLSIQLDSFQKFIEQDPEGQYGLEAAFRSVFPIQSYSGNSELQYVSYRLGEPVFDVQECQIRGVTYSAPLRVKLRLVIYEREAPEGTVKDIKEQEVYMGEIPLMTDNGTFVINGTERVIVSQLHRSPGVFFDSDKGKTHSSGKVLYNARIIPYRGSWLDFEFDPKDNLFVRIDRRRKLPATIILRALNYTTEQILDLFFEKVIFEIRDNKLQMELVPERLRGETASFDIEANGKVYVEKGRRITARHIRQLEKDDVKLIEVPVEYIAGKVVAKDYIDESTGELICAANMELSLDLLAKLSQSGHKRIETLFTNDLDHGPYISETLRVDPTNDRLSALVEIYRMMRPGEPPTREAAESLFENLFFSEDRYDLSAVGRMKFNRSLLREEIEGSGILSKDDIIDVMKKLIDIRNGKGEVDDIDHLGNRRIRSVGEMAENQFRVGLVRVERAVKERLSLGDLDTLMPQDMINAKPISAAVKEFFGSSQLSQFMDQNNPLSEITHKRRISALGPGGLTRERAGFEVRDVHPTHYGRVCPIETPEGPNIGLINSLSVYAQTNEYGFLETPYRKVTDGVVTDEIHYLSAIEEGNYVIAQANSNLDEEGHFVEDLVTCRSKGESSLFSRDQVDYMDVSTQQVVSVGASLIPFLEHDDANRALMGANMQRQAVPTLRADKPLVGTGMERAVAVDSGVTAVAKRGGVVQYVDASRIVIKVNEDEMYPGEAGIDIYNLTKYTRSNQNTCINQMPCVSLGEPVERGDVLADGPSTDLGELALGQNMRVAFMPWNGYNFEDSILVSERVVQEDRFTTIHIQELACVSRDTKLGPEEITADIPNVGEAALSKLDESGIVYIGAEVTGGDILVGKVTPKGETQLTPEEKLLRAIFGEKASDVKDSSLRVPNGVSGTVIDVQVFTRDGVEKDKRALEIEEMQLKQAKKDLSEELQILEAGLFSRIRAVLVAGGVEAEKLDKLPRDRWLELGLTDEEKQNQLEQLAEQYDELKHEFEKKLEAKRRKITQGDDLAPGVLKIVKVYLAVKRRIQPGDKMAGRHGNKGVISKINPIEDMPYDENGTPVDIVLNPLGVPSRMNIGQILETHLGMAAKGIGDKINAMLKQQQEVAKLREFIQRAYDLGADVRQKVDLSTFSDEEVMRLAENLRKGMPIATPVFDGAKEAEIKELLKLGDLPTSGQIRLYDGRTGEQFERPVTVGYMYMLKLNHLVDDKMHARSTGSYSLVTQQPLGGKAQFGGQRFGEMEVWALEAYGAAYTLQEMLTVKSDDVNGRTKMYKNIVDGNHQMEPGMPESFNVLLKEIRSLGINIELEDE</sequence>
<feature type="chain" id="PRO_1000067549" description="DNA-directed RNA polymerase subunit beta">
    <location>
        <begin position="1"/>
        <end position="1342"/>
    </location>
</feature>
<feature type="modified residue" description="N6-acetyllysine" evidence="1">
    <location>
        <position position="1022"/>
    </location>
</feature>
<feature type="modified residue" description="N6-acetyllysine" evidence="1">
    <location>
        <position position="1200"/>
    </location>
</feature>
<keyword id="KW-0007">Acetylation</keyword>
<keyword id="KW-0240">DNA-directed RNA polymerase</keyword>
<keyword id="KW-0548">Nucleotidyltransferase</keyword>
<keyword id="KW-0804">Transcription</keyword>
<keyword id="KW-0808">Transferase</keyword>